<gene>
    <name type="primary">MTHFD1L</name>
</gene>
<protein>
    <recommendedName>
        <fullName evidence="5">Monofunctional C1-tetrahydrofolate synthase, mitochondrial</fullName>
        <ecNumber evidence="3">6.3.4.3</ecNumber>
    </recommendedName>
    <alternativeName>
        <fullName>Formyltetrahydrofolate synthetase</fullName>
    </alternativeName>
</protein>
<evidence type="ECO:0000250" key="1"/>
<evidence type="ECO:0000250" key="2">
    <source>
        <dbReference type="UniProtKB" id="Q3V3R1"/>
    </source>
</evidence>
<evidence type="ECO:0000250" key="3">
    <source>
        <dbReference type="UniProtKB" id="Q6UB35"/>
    </source>
</evidence>
<evidence type="ECO:0000256" key="4">
    <source>
        <dbReference type="SAM" id="MobiDB-lite"/>
    </source>
</evidence>
<evidence type="ECO:0000305" key="5"/>
<organism>
    <name type="scientific">Bos taurus</name>
    <name type="common">Bovine</name>
    <dbReference type="NCBI Taxonomy" id="9913"/>
    <lineage>
        <taxon>Eukaryota</taxon>
        <taxon>Metazoa</taxon>
        <taxon>Chordata</taxon>
        <taxon>Craniata</taxon>
        <taxon>Vertebrata</taxon>
        <taxon>Euteleostomi</taxon>
        <taxon>Mammalia</taxon>
        <taxon>Eutheria</taxon>
        <taxon>Laurasiatheria</taxon>
        <taxon>Artiodactyla</taxon>
        <taxon>Ruminantia</taxon>
        <taxon>Pecora</taxon>
        <taxon>Bovidae</taxon>
        <taxon>Bovinae</taxon>
        <taxon>Bos</taxon>
    </lineage>
</organism>
<keyword id="KW-0007">Acetylation</keyword>
<keyword id="KW-0067">ATP-binding</keyword>
<keyword id="KW-0436">Ligase</keyword>
<keyword id="KW-0496">Mitochondrion</keyword>
<keyword id="KW-0547">Nucleotide-binding</keyword>
<keyword id="KW-0554">One-carbon metabolism</keyword>
<keyword id="KW-0597">Phosphoprotein</keyword>
<keyword id="KW-1185">Reference proteome</keyword>
<keyword id="KW-0809">Transit peptide</keyword>
<dbReference type="EC" id="6.3.4.3" evidence="3"/>
<dbReference type="EMBL" id="BC120038">
    <property type="protein sequence ID" value="AAI20039.1"/>
    <property type="molecule type" value="mRNA"/>
</dbReference>
<dbReference type="EMBL" id="BC148878">
    <property type="protein sequence ID" value="AAI48879.1"/>
    <property type="molecule type" value="mRNA"/>
</dbReference>
<dbReference type="RefSeq" id="NP_001069486.1">
    <property type="nucleotide sequence ID" value="NM_001076018.2"/>
</dbReference>
<dbReference type="SMR" id="Q0VCR7"/>
<dbReference type="FunCoup" id="Q0VCR7">
    <property type="interactions" value="866"/>
</dbReference>
<dbReference type="STRING" id="9913.ENSBTAP00000052260"/>
<dbReference type="PaxDb" id="9913-ENSBTAP00000052260"/>
<dbReference type="PeptideAtlas" id="Q0VCR7"/>
<dbReference type="GeneID" id="534296"/>
<dbReference type="KEGG" id="bta:534296"/>
<dbReference type="CTD" id="25902"/>
<dbReference type="VEuPathDB" id="HostDB:ENSBTAG00000009846"/>
<dbReference type="eggNOG" id="KOG4230">
    <property type="taxonomic scope" value="Eukaryota"/>
</dbReference>
<dbReference type="InParanoid" id="Q0VCR7"/>
<dbReference type="OMA" id="KFWNLKC"/>
<dbReference type="OrthoDB" id="1845775at2759"/>
<dbReference type="Reactome" id="R-BTA-196757">
    <property type="pathway name" value="Metabolism of folate and pterines"/>
</dbReference>
<dbReference type="UniPathway" id="UPA00193"/>
<dbReference type="Proteomes" id="UP000009136">
    <property type="component" value="Chromosome 9"/>
</dbReference>
<dbReference type="Bgee" id="ENSBTAG00000009846">
    <property type="expression patterns" value="Expressed in corpus epididymis and 105 other cell types or tissues"/>
</dbReference>
<dbReference type="GO" id="GO:0005829">
    <property type="term" value="C:cytosol"/>
    <property type="evidence" value="ECO:0000318"/>
    <property type="project" value="GO_Central"/>
</dbReference>
<dbReference type="GO" id="GO:0005739">
    <property type="term" value="C:mitochondrion"/>
    <property type="evidence" value="ECO:0000318"/>
    <property type="project" value="GO_Central"/>
</dbReference>
<dbReference type="GO" id="GO:0005524">
    <property type="term" value="F:ATP binding"/>
    <property type="evidence" value="ECO:0007669"/>
    <property type="project" value="UniProtKB-KW"/>
</dbReference>
<dbReference type="GO" id="GO:0004329">
    <property type="term" value="F:formate-tetrahydrofolate ligase activity"/>
    <property type="evidence" value="ECO:0000318"/>
    <property type="project" value="GO_Central"/>
</dbReference>
<dbReference type="GO" id="GO:0004488">
    <property type="term" value="F:methylenetetrahydrofolate dehydrogenase (NADP+) activity"/>
    <property type="evidence" value="ECO:0007669"/>
    <property type="project" value="InterPro"/>
</dbReference>
<dbReference type="GO" id="GO:0009257">
    <property type="term" value="P:10-formyltetrahydrofolate biosynthetic process"/>
    <property type="evidence" value="ECO:0000318"/>
    <property type="project" value="GO_Central"/>
</dbReference>
<dbReference type="GO" id="GO:0035999">
    <property type="term" value="P:tetrahydrofolate interconversion"/>
    <property type="evidence" value="ECO:0007669"/>
    <property type="project" value="UniProtKB-UniPathway"/>
</dbReference>
<dbReference type="CDD" id="cd00477">
    <property type="entry name" value="FTHFS"/>
    <property type="match status" value="1"/>
</dbReference>
<dbReference type="CDD" id="cd05212">
    <property type="entry name" value="NAD_bind_m-THF_DH_Cyclohyd_like"/>
    <property type="match status" value="1"/>
</dbReference>
<dbReference type="FunFam" id="1.10.8.770:FF:000001">
    <property type="entry name" value="Methylenetetrahydrofolate dehydrogenase (NADP+ dependent) 1 like"/>
    <property type="match status" value="1"/>
</dbReference>
<dbReference type="FunFam" id="3.40.50.10860:FF:000013">
    <property type="entry name" value="Methylenetetrahydrofolate dehydrogenase (NADP+ dependent) 1 like"/>
    <property type="match status" value="1"/>
</dbReference>
<dbReference type="FunFam" id="3.40.50.300:FF:000556">
    <property type="entry name" value="Methylenetetrahydrofolate dehydrogenase (NADP+ dependent) 1 like"/>
    <property type="match status" value="1"/>
</dbReference>
<dbReference type="FunFam" id="3.40.50.300:FF:000627">
    <property type="entry name" value="Methylenetetrahydrofolate dehydrogenase (NADP+ dependent) 1 like"/>
    <property type="match status" value="1"/>
</dbReference>
<dbReference type="FunFam" id="3.40.50.720:FF:000239">
    <property type="entry name" value="monofunctional C1-tetrahydrofolate synthase, mitochondrial isoform X1"/>
    <property type="match status" value="1"/>
</dbReference>
<dbReference type="FunFam" id="3.10.410.10:FF:000001">
    <property type="entry name" value="Putative formate--tetrahydrofolate ligase"/>
    <property type="match status" value="1"/>
</dbReference>
<dbReference type="Gene3D" id="1.10.8.770">
    <property type="match status" value="1"/>
</dbReference>
<dbReference type="Gene3D" id="3.10.410.10">
    <property type="entry name" value="Formyltetrahydrofolate synthetase, domain 3"/>
    <property type="match status" value="1"/>
</dbReference>
<dbReference type="Gene3D" id="3.40.50.10860">
    <property type="entry name" value="Leucine Dehydrogenase, chain A, domain 1"/>
    <property type="match status" value="1"/>
</dbReference>
<dbReference type="Gene3D" id="3.40.50.720">
    <property type="entry name" value="NAD(P)-binding Rossmann-like Domain"/>
    <property type="match status" value="1"/>
</dbReference>
<dbReference type="Gene3D" id="3.40.50.300">
    <property type="entry name" value="P-loop containing nucleotide triphosphate hydrolases"/>
    <property type="match status" value="2"/>
</dbReference>
<dbReference type="HAMAP" id="MF_01543">
    <property type="entry name" value="FTHFS"/>
    <property type="match status" value="1"/>
</dbReference>
<dbReference type="InterPro" id="IPR046346">
    <property type="entry name" value="Aminoacid_DH-like_N_sf"/>
</dbReference>
<dbReference type="InterPro" id="IPR000559">
    <property type="entry name" value="Formate_THF_ligase"/>
</dbReference>
<dbReference type="InterPro" id="IPR020628">
    <property type="entry name" value="Formate_THF_ligase_CS"/>
</dbReference>
<dbReference type="InterPro" id="IPR036291">
    <property type="entry name" value="NAD(P)-bd_dom_sf"/>
</dbReference>
<dbReference type="InterPro" id="IPR027417">
    <property type="entry name" value="P-loop_NTPase"/>
</dbReference>
<dbReference type="InterPro" id="IPR000672">
    <property type="entry name" value="THF_DH/CycHdrlase"/>
</dbReference>
<dbReference type="InterPro" id="IPR020630">
    <property type="entry name" value="THF_DH/CycHdrlase_cat_dom"/>
</dbReference>
<dbReference type="InterPro" id="IPR020631">
    <property type="entry name" value="THF_DH/CycHdrlase_NAD-bd_dom"/>
</dbReference>
<dbReference type="PANTHER" id="PTHR48099">
    <property type="entry name" value="C-1-TETRAHYDROFOLATE SYNTHASE, CYTOPLASMIC-RELATED"/>
    <property type="match status" value="1"/>
</dbReference>
<dbReference type="PANTHER" id="PTHR48099:SF12">
    <property type="entry name" value="MONOFUNCTIONAL C1-TETRAHYDROFOLATE SYNTHASE, MITOCHONDRIAL"/>
    <property type="match status" value="1"/>
</dbReference>
<dbReference type="Pfam" id="PF01268">
    <property type="entry name" value="FTHFS"/>
    <property type="match status" value="1"/>
</dbReference>
<dbReference type="Pfam" id="PF00763">
    <property type="entry name" value="THF_DHG_CYH"/>
    <property type="match status" value="1"/>
</dbReference>
<dbReference type="Pfam" id="PF02882">
    <property type="entry name" value="THF_DHG_CYH_C"/>
    <property type="match status" value="1"/>
</dbReference>
<dbReference type="PRINTS" id="PR00085">
    <property type="entry name" value="THFDHDRGNASE"/>
</dbReference>
<dbReference type="SUPFAM" id="SSF53223">
    <property type="entry name" value="Aminoacid dehydrogenase-like, N-terminal domain"/>
    <property type="match status" value="1"/>
</dbReference>
<dbReference type="SUPFAM" id="SSF51735">
    <property type="entry name" value="NAD(P)-binding Rossmann-fold domains"/>
    <property type="match status" value="1"/>
</dbReference>
<dbReference type="SUPFAM" id="SSF52540">
    <property type="entry name" value="P-loop containing nucleoside triphosphate hydrolases"/>
    <property type="match status" value="1"/>
</dbReference>
<dbReference type="PROSITE" id="PS00721">
    <property type="entry name" value="FTHFS_1"/>
    <property type="match status" value="1"/>
</dbReference>
<dbReference type="PROSITE" id="PS00722">
    <property type="entry name" value="FTHFS_2"/>
    <property type="match status" value="1"/>
</dbReference>
<accession>Q0VCR7</accession>
<accession>A6QNK9</accession>
<name>C1TM_BOVIN</name>
<proteinExistence type="evidence at transcript level"/>
<feature type="transit peptide" description="Mitochondrion" evidence="3">
    <location>
        <begin position="1"/>
        <end position="30"/>
    </location>
</feature>
<feature type="chain" id="PRO_0000343176" description="Monofunctional C1-tetrahydrofolate synthase, mitochondrial">
    <location>
        <begin position="31"/>
        <end position="975"/>
    </location>
</feature>
<feature type="region of interest" description="Disordered" evidence="4">
    <location>
        <begin position="13"/>
        <end position="45"/>
    </location>
</feature>
<feature type="region of interest" description="Methylenetetrahydrofolate dehydrogenase and cyclohydrolase">
    <location>
        <begin position="31"/>
        <end position="345"/>
    </location>
</feature>
<feature type="region of interest" description="Formyltetrahydrofolate synthetase">
    <location>
        <begin position="346"/>
        <end position="975"/>
    </location>
</feature>
<feature type="compositionally biased region" description="Gly residues" evidence="4">
    <location>
        <begin position="34"/>
        <end position="44"/>
    </location>
</feature>
<feature type="binding site" evidence="1">
    <location>
        <begin position="420"/>
        <end position="427"/>
    </location>
    <ligand>
        <name>ATP</name>
        <dbReference type="ChEBI" id="CHEBI:30616"/>
    </ligand>
</feature>
<feature type="modified residue" description="N6-acetyllysine; alternate" evidence="3">
    <location>
        <position position="187"/>
    </location>
</feature>
<feature type="modified residue" description="N6-succinyllysine; alternate" evidence="2">
    <location>
        <position position="187"/>
    </location>
</feature>
<feature type="modified residue" description="Phosphoserine" evidence="3">
    <location>
        <position position="354"/>
    </location>
</feature>
<feature type="modified residue" description="N6-succinyllysine" evidence="2">
    <location>
        <position position="593"/>
    </location>
</feature>
<feature type="sequence conflict" description="In Ref. 1; AAI20039." evidence="5" ref="1">
    <original>E</original>
    <variation>G</variation>
    <location>
        <position position="195"/>
    </location>
</feature>
<comment type="function">
    <text evidence="3">May provide the missing metabolic reaction required to link the mitochondria and the cytoplasm in the mammalian model of one-carbon folate metabolism complementing thus the enzymatic activities of MTHFD2.</text>
</comment>
<comment type="catalytic activity">
    <reaction evidence="3">
        <text>(6S)-5,6,7,8-tetrahydrofolate + formate + ATP = (6R)-10-formyltetrahydrofolate + ADP + phosphate</text>
        <dbReference type="Rhea" id="RHEA:20221"/>
        <dbReference type="ChEBI" id="CHEBI:15740"/>
        <dbReference type="ChEBI" id="CHEBI:30616"/>
        <dbReference type="ChEBI" id="CHEBI:43474"/>
        <dbReference type="ChEBI" id="CHEBI:57453"/>
        <dbReference type="ChEBI" id="CHEBI:195366"/>
        <dbReference type="ChEBI" id="CHEBI:456216"/>
        <dbReference type="EC" id="6.3.4.3"/>
    </reaction>
    <physiologicalReaction direction="left-to-right" evidence="3">
        <dbReference type="Rhea" id="RHEA:20222"/>
    </physiologicalReaction>
</comment>
<comment type="pathway">
    <text evidence="3">One-carbon metabolism; tetrahydrofolate interconversion.</text>
</comment>
<comment type="subunit">
    <text evidence="3">Homodimer.</text>
</comment>
<comment type="subcellular location">
    <subcellularLocation>
        <location evidence="3">Mitochondrion</location>
    </subcellularLocation>
</comment>
<comment type="domain">
    <text>This monofunctional enzyme consists of two major domains: an N-terminal inactive methylene-THF dehydrogenase and cyclohydrolase domain and an active larger formyl-THF synthetase C-terminal domain.</text>
</comment>
<comment type="similarity">
    <text evidence="5">In the N-terminal section; belongs to the tetrahydrofolate dehydrogenase/cyclohydrolase family.</text>
</comment>
<comment type="similarity">
    <text evidence="5">In the C-terminal section; belongs to the formate--tetrahydrofolate ligase family.</text>
</comment>
<sequence>MSARLPFVLRRLARPQHPGSPRRLPSLCRASSGRGSGCGGGEGLLGQQRLRDTQAGSSRGPGSPAPPARDSIVREVIQNSKEVLSLLQEKTPTFKPVLAIIQAGDDNLMQEVNQNLAEEAGLNITHICLPAESGEDEIIDEILKINEDSRVHGLALQIAETSFSNKILNALKPEKDVDGLTDVNLGKLVRGDAHECFISPVARAVIELLEKSGVSLDGKKILVIGAHGSLEATLQCLFQRKGSMTMSSQWKTPQLQGKLQEADIVVLGSPKPEEIPLSWIQPGTTVFNCSHDFLSGKAACISSGVHGISPIAEDVSLLAAALRIQNMVSSGRRWLREQQHRRWRLHCLKLQPLSPVPSDIEISRAQTPKAVEILAKEIGLLADEIEIYGKSKAKVRLSLLERLKDQADGKYVLVAGITPTPLGEGKSTVTIGLVQALTAHLNVNSFACLRQPSQGPTFGVKGGAAGGGYAQVIPMEEFNLHLTGDIHAITAANNLLAAAIDARILHENTQTDKALYNRLVPSVNGVREFSKIQLARLKRLGINKTDPSALTEEEMRKFARLDIDPSTITWQRVVDTNDRFLRKITIGQANTEKGCSRQAQFDIAVASEIMAVLALTDSLSDMKERLGRMVVASDRNGQPVTADDLGVTGALTVLMKDAIKPNLMQTLEGTPVFVHAGPFANIAHGNSSVLADKIALKLVGEGGFVVTEAGFGADIGMEKFFNIKCRASGLVPSVVVLVATVRALKMHGGGPSVTAGVPLRKEYTEENLQLVADGCCNLEKQIQIAQLFGVPVVVALNVFKTDTRAEIDLVCELAKRAGAFNAVPCYHWSIGGKGSVDLAWAVREAASKESRFQFLYDVQLPIVEKIRTIAQSVYGAKDIELSPEAQSKIDRYTEQGFGNLPICMAKTHLSLSHQPDKKGVPKGFILPISDVRASIGAGFIYPLVGTMSTMPGLPTRPCFYDIDLDTETEQVKGLF</sequence>
<reference key="1">
    <citation type="submission" date="2006-08" db="EMBL/GenBank/DDBJ databases">
        <authorList>
            <consortium name="NIH - Mammalian Gene Collection (MGC) project"/>
        </authorList>
    </citation>
    <scope>NUCLEOTIDE SEQUENCE [LARGE SCALE MRNA]</scope>
    <source>
        <strain>Hereford</strain>
        <tissue>Fetal liver</tissue>
        <tissue>Thymus</tissue>
    </source>
</reference>